<protein>
    <recommendedName>
        <fullName evidence="1">Glutamyl-tRNA reductase</fullName>
        <shortName evidence="1">GluTR</shortName>
        <ecNumber evidence="1">1.2.1.70</ecNumber>
    </recommendedName>
</protein>
<accession>A0K438</accession>
<comment type="function">
    <text evidence="1">Catalyzes the NADPH-dependent reduction of glutamyl-tRNA(Glu) to glutamate 1-semialdehyde (GSA).</text>
</comment>
<comment type="catalytic activity">
    <reaction evidence="1">
        <text>(S)-4-amino-5-oxopentanoate + tRNA(Glu) + NADP(+) = L-glutamyl-tRNA(Glu) + NADPH + H(+)</text>
        <dbReference type="Rhea" id="RHEA:12344"/>
        <dbReference type="Rhea" id="RHEA-COMP:9663"/>
        <dbReference type="Rhea" id="RHEA-COMP:9680"/>
        <dbReference type="ChEBI" id="CHEBI:15378"/>
        <dbReference type="ChEBI" id="CHEBI:57501"/>
        <dbReference type="ChEBI" id="CHEBI:57783"/>
        <dbReference type="ChEBI" id="CHEBI:58349"/>
        <dbReference type="ChEBI" id="CHEBI:78442"/>
        <dbReference type="ChEBI" id="CHEBI:78520"/>
        <dbReference type="EC" id="1.2.1.70"/>
    </reaction>
</comment>
<comment type="pathway">
    <text evidence="1">Porphyrin-containing compound metabolism; protoporphyrin-IX biosynthesis; 5-aminolevulinate from L-glutamyl-tRNA(Glu): step 1/2.</text>
</comment>
<comment type="subunit">
    <text evidence="1">Homodimer.</text>
</comment>
<comment type="domain">
    <text evidence="1">Possesses an unusual extended V-shaped dimeric structure with each monomer consisting of three distinct domains arranged along a curved 'spinal' alpha-helix. The N-terminal catalytic domain specifically recognizes the glutamate moiety of the substrate. The second domain is the NADPH-binding domain, and the third C-terminal domain is responsible for dimerization.</text>
</comment>
<comment type="miscellaneous">
    <text evidence="1">During catalysis, the active site Cys acts as a nucleophile attacking the alpha-carbonyl group of tRNA-bound glutamate with the formation of a thioester intermediate between enzyme and glutamate, and the concomitant release of tRNA(Glu). The thioester intermediate is finally reduced by direct hydride transfer from NADPH, to form the product GSA.</text>
</comment>
<comment type="similarity">
    <text evidence="1">Belongs to the glutamyl-tRNA reductase family.</text>
</comment>
<feature type="chain" id="PRO_1000004598" description="Glutamyl-tRNA reductase">
    <location>
        <begin position="1"/>
        <end position="432"/>
    </location>
</feature>
<feature type="active site" description="Nucleophile" evidence="1">
    <location>
        <position position="56"/>
    </location>
</feature>
<feature type="binding site" evidence="1">
    <location>
        <begin position="55"/>
        <end position="58"/>
    </location>
    <ligand>
        <name>substrate</name>
    </ligand>
</feature>
<feature type="binding site" evidence="1">
    <location>
        <position position="114"/>
    </location>
    <ligand>
        <name>substrate</name>
    </ligand>
</feature>
<feature type="binding site" evidence="1">
    <location>
        <begin position="119"/>
        <end position="121"/>
    </location>
    <ligand>
        <name>substrate</name>
    </ligand>
</feature>
<feature type="binding site" evidence="1">
    <location>
        <position position="125"/>
    </location>
    <ligand>
        <name>substrate</name>
    </ligand>
</feature>
<feature type="binding site" evidence="1">
    <location>
        <begin position="194"/>
        <end position="199"/>
    </location>
    <ligand>
        <name>NADP(+)</name>
        <dbReference type="ChEBI" id="CHEBI:58349"/>
    </ligand>
</feature>
<feature type="site" description="Important for activity" evidence="1">
    <location>
        <position position="104"/>
    </location>
</feature>
<dbReference type="EC" id="1.2.1.70" evidence="1"/>
<dbReference type="EMBL" id="CP000458">
    <property type="protein sequence ID" value="ABK07265.1"/>
    <property type="molecule type" value="Genomic_DNA"/>
</dbReference>
<dbReference type="RefSeq" id="WP_006477063.1">
    <property type="nucleotide sequence ID" value="NC_008542.1"/>
</dbReference>
<dbReference type="SMR" id="A0K438"/>
<dbReference type="GeneID" id="83047279"/>
<dbReference type="KEGG" id="bch:Bcen2424_0511"/>
<dbReference type="HOGENOM" id="CLU_035113_2_2_4"/>
<dbReference type="UniPathway" id="UPA00251">
    <property type="reaction ID" value="UER00316"/>
</dbReference>
<dbReference type="GO" id="GO:0008883">
    <property type="term" value="F:glutamyl-tRNA reductase activity"/>
    <property type="evidence" value="ECO:0007669"/>
    <property type="project" value="UniProtKB-UniRule"/>
</dbReference>
<dbReference type="GO" id="GO:0050661">
    <property type="term" value="F:NADP binding"/>
    <property type="evidence" value="ECO:0007669"/>
    <property type="project" value="InterPro"/>
</dbReference>
<dbReference type="GO" id="GO:0019353">
    <property type="term" value="P:protoporphyrinogen IX biosynthetic process from glutamate"/>
    <property type="evidence" value="ECO:0007669"/>
    <property type="project" value="TreeGrafter"/>
</dbReference>
<dbReference type="CDD" id="cd05213">
    <property type="entry name" value="NAD_bind_Glutamyl_tRNA_reduct"/>
    <property type="match status" value="1"/>
</dbReference>
<dbReference type="FunFam" id="3.30.460.30:FF:000001">
    <property type="entry name" value="Glutamyl-tRNA reductase"/>
    <property type="match status" value="1"/>
</dbReference>
<dbReference type="FunFam" id="3.40.50.720:FF:000031">
    <property type="entry name" value="Glutamyl-tRNA reductase"/>
    <property type="match status" value="1"/>
</dbReference>
<dbReference type="Gene3D" id="3.30.460.30">
    <property type="entry name" value="Glutamyl-tRNA reductase, N-terminal domain"/>
    <property type="match status" value="1"/>
</dbReference>
<dbReference type="Gene3D" id="3.40.50.720">
    <property type="entry name" value="NAD(P)-binding Rossmann-like Domain"/>
    <property type="match status" value="1"/>
</dbReference>
<dbReference type="HAMAP" id="MF_00087">
    <property type="entry name" value="Glu_tRNA_reductase"/>
    <property type="match status" value="1"/>
</dbReference>
<dbReference type="InterPro" id="IPR000343">
    <property type="entry name" value="4pyrrol_synth_GluRdtase"/>
</dbReference>
<dbReference type="InterPro" id="IPR015896">
    <property type="entry name" value="4pyrrol_synth_GluRdtase_dimer"/>
</dbReference>
<dbReference type="InterPro" id="IPR015895">
    <property type="entry name" value="4pyrrol_synth_GluRdtase_N"/>
</dbReference>
<dbReference type="InterPro" id="IPR018214">
    <property type="entry name" value="GluRdtase_CS"/>
</dbReference>
<dbReference type="InterPro" id="IPR036453">
    <property type="entry name" value="GluRdtase_dimer_dom_sf"/>
</dbReference>
<dbReference type="InterPro" id="IPR036343">
    <property type="entry name" value="GluRdtase_N_sf"/>
</dbReference>
<dbReference type="InterPro" id="IPR036291">
    <property type="entry name" value="NAD(P)-bd_dom_sf"/>
</dbReference>
<dbReference type="InterPro" id="IPR006151">
    <property type="entry name" value="Shikm_DH/Glu-tRNA_Rdtase"/>
</dbReference>
<dbReference type="NCBIfam" id="TIGR01035">
    <property type="entry name" value="hemA"/>
    <property type="match status" value="1"/>
</dbReference>
<dbReference type="PANTHER" id="PTHR43013">
    <property type="entry name" value="GLUTAMYL-TRNA REDUCTASE"/>
    <property type="match status" value="1"/>
</dbReference>
<dbReference type="PANTHER" id="PTHR43013:SF1">
    <property type="entry name" value="GLUTAMYL-TRNA REDUCTASE"/>
    <property type="match status" value="1"/>
</dbReference>
<dbReference type="Pfam" id="PF00745">
    <property type="entry name" value="GlutR_dimer"/>
    <property type="match status" value="1"/>
</dbReference>
<dbReference type="Pfam" id="PF05201">
    <property type="entry name" value="GlutR_N"/>
    <property type="match status" value="1"/>
</dbReference>
<dbReference type="Pfam" id="PF01488">
    <property type="entry name" value="Shikimate_DH"/>
    <property type="match status" value="1"/>
</dbReference>
<dbReference type="PIRSF" id="PIRSF000445">
    <property type="entry name" value="4pyrrol_synth_GluRdtase"/>
    <property type="match status" value="1"/>
</dbReference>
<dbReference type="SUPFAM" id="SSF69742">
    <property type="entry name" value="Glutamyl tRNA-reductase catalytic, N-terminal domain"/>
    <property type="match status" value="1"/>
</dbReference>
<dbReference type="SUPFAM" id="SSF69075">
    <property type="entry name" value="Glutamyl tRNA-reductase dimerization domain"/>
    <property type="match status" value="1"/>
</dbReference>
<dbReference type="SUPFAM" id="SSF51735">
    <property type="entry name" value="NAD(P)-binding Rossmann-fold domains"/>
    <property type="match status" value="1"/>
</dbReference>
<dbReference type="PROSITE" id="PS00747">
    <property type="entry name" value="GLUTR"/>
    <property type="match status" value="1"/>
</dbReference>
<reference key="1">
    <citation type="submission" date="2006-08" db="EMBL/GenBank/DDBJ databases">
        <title>Complete sequence of chromosome 1 of Burkholderia cenocepacia HI2424.</title>
        <authorList>
            <person name="Copeland A."/>
            <person name="Lucas S."/>
            <person name="Lapidus A."/>
            <person name="Barry K."/>
            <person name="Detter J.C."/>
            <person name="Glavina del Rio T."/>
            <person name="Hammon N."/>
            <person name="Israni S."/>
            <person name="Pitluck S."/>
            <person name="Chain P."/>
            <person name="Malfatti S."/>
            <person name="Shin M."/>
            <person name="Vergez L."/>
            <person name="Schmutz J."/>
            <person name="Larimer F."/>
            <person name="Land M."/>
            <person name="Hauser L."/>
            <person name="Kyrpides N."/>
            <person name="Kim E."/>
            <person name="LiPuma J.J."/>
            <person name="Gonzalez C.F."/>
            <person name="Konstantinidis K."/>
            <person name="Tiedje J.M."/>
            <person name="Richardson P."/>
        </authorList>
    </citation>
    <scope>NUCLEOTIDE SEQUENCE [LARGE SCALE GENOMIC DNA]</scope>
    <source>
        <strain>HI2424</strain>
    </source>
</reference>
<gene>
    <name evidence="1" type="primary">hemA</name>
    <name type="ordered locus">Bcen2424_0511</name>
</gene>
<keyword id="KW-0521">NADP</keyword>
<keyword id="KW-0560">Oxidoreductase</keyword>
<keyword id="KW-0627">Porphyrin biosynthesis</keyword>
<proteinExistence type="inferred from homology"/>
<organism>
    <name type="scientific">Burkholderia cenocepacia (strain HI2424)</name>
    <dbReference type="NCBI Taxonomy" id="331272"/>
    <lineage>
        <taxon>Bacteria</taxon>
        <taxon>Pseudomonadati</taxon>
        <taxon>Pseudomonadota</taxon>
        <taxon>Betaproteobacteria</taxon>
        <taxon>Burkholderiales</taxon>
        <taxon>Burkholderiaceae</taxon>
        <taxon>Burkholderia</taxon>
        <taxon>Burkholderia cepacia complex</taxon>
    </lineage>
</organism>
<sequence length="432" mass="47491">MQLLTIGINHHTAPVALRERVAFPLEQIKPALVTFKNVFLGPQAPNTPEAAILSTCNRTELYCATDDRAAREGAVRWLSEYHRIPVDELAPHVYALPQSEAVRHAFRVASGLDSMVLGETQILGQMKDAVRTATEAGALGTYLNQLFQRTFAVAKEVRGTTEIGTQSVSMAAAAVRLAQRIFEKVSDQRVLFIGAGEMIELCATHFAAQGPRELVVANRTAERGQRLAERFNGRAMPLADLPTRMHEFDIIVSCTASTLPIIGLGAVERAVKARRHRPIFMVDLAVPRDIEPEVGKLKDVFLYTVDDLGAIVREGNASRQAAVAQAEAIIETRVQNFMQWLDTRSVVPVIRHMHTQADALRRAEVEKAQKLLARGDDPAAVLEALSQALTNKLIHGPTSALNRVNGADRDSLIDLMRGFYQHAPRSNDQSGH</sequence>
<name>HEM1_BURCH</name>
<evidence type="ECO:0000255" key="1">
    <source>
        <dbReference type="HAMAP-Rule" id="MF_00087"/>
    </source>
</evidence>